<comment type="function">
    <text evidence="1 2">May be involved in the regulation of capsular polysaccharide biosynthesis. Autophosphorylates in vitro. Phosphorylates and activates in vitro two UDP-glucose dehydrogenases, YwqF and TuaD, as well as the DNA-binding proteins Ssb and SsbB.</text>
</comment>
<comment type="catalytic activity">
    <reaction>
        <text>L-tyrosyl-[protein] + ATP = O-phospho-L-tyrosyl-[protein] + ADP + H(+)</text>
        <dbReference type="Rhea" id="RHEA:10596"/>
        <dbReference type="Rhea" id="RHEA-COMP:10136"/>
        <dbReference type="Rhea" id="RHEA-COMP:20101"/>
        <dbReference type="ChEBI" id="CHEBI:15378"/>
        <dbReference type="ChEBI" id="CHEBI:30616"/>
        <dbReference type="ChEBI" id="CHEBI:46858"/>
        <dbReference type="ChEBI" id="CHEBI:61978"/>
        <dbReference type="ChEBI" id="CHEBI:456216"/>
        <dbReference type="EC" id="2.7.10.2"/>
    </reaction>
</comment>
<comment type="interaction">
    <interactant intactId="EBI-9302929">
        <id>P96716</id>
    </interactant>
    <interactant intactId="EBI-5242785">
        <id>O34483</id>
        <label>hprK</label>
    </interactant>
    <organismsDiffer>false</organismsDiffer>
    <experiments>2</experiments>
</comment>
<comment type="interaction">
    <interactant intactId="EBI-9302929">
        <id>P96716</id>
    </interactant>
    <interactant intactId="EBI-6502875">
        <id>Q01464</id>
        <label>minD</label>
    </interactant>
    <organismsDiffer>false</organismsDiffer>
    <experiments>4</experiments>
</comment>
<comment type="interaction">
    <interactant intactId="EBI-9302929">
        <id>P96716</id>
    </interactant>
    <interactant intactId="EBI-6667154">
        <id>O34507</id>
        <label>prkC</label>
    </interactant>
    <organismsDiffer>false</organismsDiffer>
    <experiments>2</experiments>
</comment>
<comment type="interaction">
    <interactant intactId="EBI-9302929">
        <id>P96716</id>
    </interactant>
    <interactant intactId="EBI-9303331">
        <id>P37562</id>
        <label>yabT</label>
    </interactant>
    <organismsDiffer>false</organismsDiffer>
    <experiments>3</experiments>
</comment>
<comment type="interaction">
    <interactant intactId="EBI-9302929">
        <id>P96716</id>
    </interactant>
    <interactant intactId="EBI-9302918">
        <id>P96715</id>
        <label>ywqC</label>
    </interactant>
    <organismsDiffer>false</organismsDiffer>
    <experiments>6</experiments>
</comment>
<comment type="PTM">
    <text evidence="1">Autophosphorylated in vitro, which inhibits ATPase activity. Dephosphorylated by YwqE in vitro.</text>
</comment>
<comment type="similarity">
    <text evidence="3">Belongs to the CpsD/CapB family.</text>
</comment>
<gene>
    <name type="primary">ywqD</name>
    <name type="ordered locus">BSU36250</name>
</gene>
<organism>
    <name type="scientific">Bacillus subtilis (strain 168)</name>
    <dbReference type="NCBI Taxonomy" id="224308"/>
    <lineage>
        <taxon>Bacteria</taxon>
        <taxon>Bacillati</taxon>
        <taxon>Bacillota</taxon>
        <taxon>Bacilli</taxon>
        <taxon>Bacillales</taxon>
        <taxon>Bacillaceae</taxon>
        <taxon>Bacillus</taxon>
    </lineage>
</organism>
<name>YWQD_BACSU</name>
<proteinExistence type="evidence at protein level"/>
<keyword id="KW-0067">ATP-binding</keyword>
<keyword id="KW-0972">Capsule biogenesis/degradation</keyword>
<keyword id="KW-0270">Exopolysaccharide synthesis</keyword>
<keyword id="KW-0418">Kinase</keyword>
<keyword id="KW-0547">Nucleotide-binding</keyword>
<keyword id="KW-0597">Phosphoprotein</keyword>
<keyword id="KW-1185">Reference proteome</keyword>
<keyword id="KW-0808">Transferase</keyword>
<keyword id="KW-0829">Tyrosine-protein kinase</keyword>
<reference key="1">
    <citation type="journal article" date="1997" name="Microbiology">
        <title>The Bacillus subtilis genome from gerBC (311 degrees) to licR (334 degrees).</title>
        <authorList>
            <person name="Presecan E."/>
            <person name="Moszer I."/>
            <person name="Boursier L."/>
            <person name="Cruz Ramos H."/>
            <person name="De La Fuente V."/>
            <person name="Hullo M.-F."/>
            <person name="Lelong C."/>
            <person name="Schleich S."/>
            <person name="Sekowska A."/>
            <person name="Song B.H."/>
            <person name="Villani G."/>
            <person name="Kunst F."/>
            <person name="Danchin A."/>
            <person name="Glaser P."/>
        </authorList>
    </citation>
    <scope>NUCLEOTIDE SEQUENCE [GENOMIC DNA]</scope>
    <source>
        <strain>168</strain>
    </source>
</reference>
<reference key="2">
    <citation type="journal article" date="1997" name="Nature">
        <title>The complete genome sequence of the Gram-positive bacterium Bacillus subtilis.</title>
        <authorList>
            <person name="Kunst F."/>
            <person name="Ogasawara N."/>
            <person name="Moszer I."/>
            <person name="Albertini A.M."/>
            <person name="Alloni G."/>
            <person name="Azevedo V."/>
            <person name="Bertero M.G."/>
            <person name="Bessieres P."/>
            <person name="Bolotin A."/>
            <person name="Borchert S."/>
            <person name="Borriss R."/>
            <person name="Boursier L."/>
            <person name="Brans A."/>
            <person name="Braun M."/>
            <person name="Brignell S.C."/>
            <person name="Bron S."/>
            <person name="Brouillet S."/>
            <person name="Bruschi C.V."/>
            <person name="Caldwell B."/>
            <person name="Capuano V."/>
            <person name="Carter N.M."/>
            <person name="Choi S.-K."/>
            <person name="Codani J.-J."/>
            <person name="Connerton I.F."/>
            <person name="Cummings N.J."/>
            <person name="Daniel R.A."/>
            <person name="Denizot F."/>
            <person name="Devine K.M."/>
            <person name="Duesterhoeft A."/>
            <person name="Ehrlich S.D."/>
            <person name="Emmerson P.T."/>
            <person name="Entian K.-D."/>
            <person name="Errington J."/>
            <person name="Fabret C."/>
            <person name="Ferrari E."/>
            <person name="Foulger D."/>
            <person name="Fritz C."/>
            <person name="Fujita M."/>
            <person name="Fujita Y."/>
            <person name="Fuma S."/>
            <person name="Galizzi A."/>
            <person name="Galleron N."/>
            <person name="Ghim S.-Y."/>
            <person name="Glaser P."/>
            <person name="Goffeau A."/>
            <person name="Golightly E.J."/>
            <person name="Grandi G."/>
            <person name="Guiseppi G."/>
            <person name="Guy B.J."/>
            <person name="Haga K."/>
            <person name="Haiech J."/>
            <person name="Harwood C.R."/>
            <person name="Henaut A."/>
            <person name="Hilbert H."/>
            <person name="Holsappel S."/>
            <person name="Hosono S."/>
            <person name="Hullo M.-F."/>
            <person name="Itaya M."/>
            <person name="Jones L.-M."/>
            <person name="Joris B."/>
            <person name="Karamata D."/>
            <person name="Kasahara Y."/>
            <person name="Klaerr-Blanchard M."/>
            <person name="Klein C."/>
            <person name="Kobayashi Y."/>
            <person name="Koetter P."/>
            <person name="Koningstein G."/>
            <person name="Krogh S."/>
            <person name="Kumano M."/>
            <person name="Kurita K."/>
            <person name="Lapidus A."/>
            <person name="Lardinois S."/>
            <person name="Lauber J."/>
            <person name="Lazarevic V."/>
            <person name="Lee S.-M."/>
            <person name="Levine A."/>
            <person name="Liu H."/>
            <person name="Masuda S."/>
            <person name="Mauel C."/>
            <person name="Medigue C."/>
            <person name="Medina N."/>
            <person name="Mellado R.P."/>
            <person name="Mizuno M."/>
            <person name="Moestl D."/>
            <person name="Nakai S."/>
            <person name="Noback M."/>
            <person name="Noone D."/>
            <person name="O'Reilly M."/>
            <person name="Ogawa K."/>
            <person name="Ogiwara A."/>
            <person name="Oudega B."/>
            <person name="Park S.-H."/>
            <person name="Parro V."/>
            <person name="Pohl T.M."/>
            <person name="Portetelle D."/>
            <person name="Porwollik S."/>
            <person name="Prescott A.M."/>
            <person name="Presecan E."/>
            <person name="Pujic P."/>
            <person name="Purnelle B."/>
            <person name="Rapoport G."/>
            <person name="Rey M."/>
            <person name="Reynolds S."/>
            <person name="Rieger M."/>
            <person name="Rivolta C."/>
            <person name="Rocha E."/>
            <person name="Roche B."/>
            <person name="Rose M."/>
            <person name="Sadaie Y."/>
            <person name="Sato T."/>
            <person name="Scanlan E."/>
            <person name="Schleich S."/>
            <person name="Schroeter R."/>
            <person name="Scoffone F."/>
            <person name="Sekiguchi J."/>
            <person name="Sekowska A."/>
            <person name="Seror S.J."/>
            <person name="Serror P."/>
            <person name="Shin B.-S."/>
            <person name="Soldo B."/>
            <person name="Sorokin A."/>
            <person name="Tacconi E."/>
            <person name="Takagi T."/>
            <person name="Takahashi H."/>
            <person name="Takemaru K."/>
            <person name="Takeuchi M."/>
            <person name="Tamakoshi A."/>
            <person name="Tanaka T."/>
            <person name="Terpstra P."/>
            <person name="Tognoni A."/>
            <person name="Tosato V."/>
            <person name="Uchiyama S."/>
            <person name="Vandenbol M."/>
            <person name="Vannier F."/>
            <person name="Vassarotti A."/>
            <person name="Viari A."/>
            <person name="Wambutt R."/>
            <person name="Wedler E."/>
            <person name="Wedler H."/>
            <person name="Weitzenegger T."/>
            <person name="Winters P."/>
            <person name="Wipat A."/>
            <person name="Yamamoto H."/>
            <person name="Yamane K."/>
            <person name="Yasumoto K."/>
            <person name="Yata K."/>
            <person name="Yoshida K."/>
            <person name="Yoshikawa H.-F."/>
            <person name="Zumstein E."/>
            <person name="Yoshikawa H."/>
            <person name="Danchin A."/>
        </authorList>
    </citation>
    <scope>NUCLEOTIDE SEQUENCE [LARGE SCALE GENOMIC DNA]</scope>
    <source>
        <strain>168</strain>
    </source>
</reference>
<reference key="3">
    <citation type="journal article" date="2003" name="EMBO J.">
        <title>Transmembrane modulator-dependent bacterial tyrosine kinase activates UDP-glucose dehydrogenases.</title>
        <authorList>
            <person name="Mijakovic I."/>
            <person name="Poncet S."/>
            <person name="Boel G."/>
            <person name="Maze A."/>
            <person name="Gillet S."/>
            <person name="Jamet E."/>
            <person name="Decottignies P."/>
            <person name="Grangeasse C."/>
            <person name="Doublet P."/>
            <person name="Le Marechal P."/>
            <person name="Deutscher J."/>
        </authorList>
    </citation>
    <scope>FUNCTION</scope>
    <scope>MUTAGENESIS OF ASP-81; ASP-83; TYR-225; TYR-227 AND TYR-228</scope>
    <scope>PHOSPHORYLATION AT TYR-228</scope>
</reference>
<reference key="4">
    <citation type="journal article" date="2006" name="Nucleic Acids Res.">
        <title>Bacterial single-stranded DNA-binding proteins are phosphorylated on tyrosine.</title>
        <authorList>
            <person name="Mijakovic I."/>
            <person name="Petranovic D."/>
            <person name="Macek B."/>
            <person name="Cepo T."/>
            <person name="Mann M."/>
            <person name="Davies J."/>
            <person name="Jensen P.R."/>
            <person name="Vujaklija D."/>
        </authorList>
    </citation>
    <scope>FUNCTION</scope>
    <source>
        <strain>168</strain>
    </source>
</reference>
<accession>P96716</accession>
<dbReference type="EC" id="2.7.10.2"/>
<dbReference type="EMBL" id="Z92952">
    <property type="protein sequence ID" value="CAB07457.1"/>
    <property type="molecule type" value="Genomic_DNA"/>
</dbReference>
<dbReference type="EMBL" id="AL009126">
    <property type="protein sequence ID" value="CAB15642.1"/>
    <property type="molecule type" value="Genomic_DNA"/>
</dbReference>
<dbReference type="PIR" id="G70066">
    <property type="entry name" value="G70066"/>
</dbReference>
<dbReference type="RefSeq" id="WP_003244182.1">
    <property type="nucleotide sequence ID" value="NZ_OZ025638.1"/>
</dbReference>
<dbReference type="SMR" id="P96716"/>
<dbReference type="FunCoup" id="P96716">
    <property type="interactions" value="23"/>
</dbReference>
<dbReference type="IntAct" id="P96716">
    <property type="interactions" value="14"/>
</dbReference>
<dbReference type="STRING" id="224308.BSU36250"/>
<dbReference type="iPTMnet" id="P96716"/>
<dbReference type="PaxDb" id="224308-BSU36250"/>
<dbReference type="EnsemblBacteria" id="CAB15642">
    <property type="protein sequence ID" value="CAB15642"/>
    <property type="gene ID" value="BSU_36250"/>
</dbReference>
<dbReference type="GeneID" id="936896"/>
<dbReference type="KEGG" id="bsu:BSU36250"/>
<dbReference type="PATRIC" id="fig|224308.179.peg.3923"/>
<dbReference type="eggNOG" id="COG0489">
    <property type="taxonomic scope" value="Bacteria"/>
</dbReference>
<dbReference type="InParanoid" id="P96716"/>
<dbReference type="OrthoDB" id="9794577at2"/>
<dbReference type="PhylomeDB" id="P96716"/>
<dbReference type="BioCyc" id="BSUB:BSU36250-MONOMER"/>
<dbReference type="Proteomes" id="UP000001570">
    <property type="component" value="Chromosome"/>
</dbReference>
<dbReference type="GO" id="GO:0005524">
    <property type="term" value="F:ATP binding"/>
    <property type="evidence" value="ECO:0007669"/>
    <property type="project" value="UniProtKB-KW"/>
</dbReference>
<dbReference type="GO" id="GO:0004715">
    <property type="term" value="F:non-membrane spanning protein tyrosine kinase activity"/>
    <property type="evidence" value="ECO:0007669"/>
    <property type="project" value="UniProtKB-EC"/>
</dbReference>
<dbReference type="GO" id="GO:0000271">
    <property type="term" value="P:polysaccharide biosynthetic process"/>
    <property type="evidence" value="ECO:0007669"/>
    <property type="project" value="UniProtKB-KW"/>
</dbReference>
<dbReference type="CDD" id="cd05387">
    <property type="entry name" value="BY-kinase"/>
    <property type="match status" value="1"/>
</dbReference>
<dbReference type="FunFam" id="3.40.50.300:FF:000527">
    <property type="entry name" value="Tyrosine-protein kinase etk"/>
    <property type="match status" value="1"/>
</dbReference>
<dbReference type="Gene3D" id="3.40.50.300">
    <property type="entry name" value="P-loop containing nucleotide triphosphate hydrolases"/>
    <property type="match status" value="1"/>
</dbReference>
<dbReference type="InterPro" id="IPR025669">
    <property type="entry name" value="AAA_dom"/>
</dbReference>
<dbReference type="InterPro" id="IPR050445">
    <property type="entry name" value="Bact_polysacc_biosynth/exp"/>
</dbReference>
<dbReference type="InterPro" id="IPR027417">
    <property type="entry name" value="P-loop_NTPase"/>
</dbReference>
<dbReference type="InterPro" id="IPR005702">
    <property type="entry name" value="Wzc-like_C"/>
</dbReference>
<dbReference type="NCBIfam" id="TIGR01007">
    <property type="entry name" value="eps_fam"/>
    <property type="match status" value="1"/>
</dbReference>
<dbReference type="PANTHER" id="PTHR32309:SF13">
    <property type="entry name" value="FERRIC ENTEROBACTIN TRANSPORT PROTEIN FEPE"/>
    <property type="match status" value="1"/>
</dbReference>
<dbReference type="PANTHER" id="PTHR32309">
    <property type="entry name" value="TYROSINE-PROTEIN KINASE"/>
    <property type="match status" value="1"/>
</dbReference>
<dbReference type="Pfam" id="PF13614">
    <property type="entry name" value="AAA_31"/>
    <property type="match status" value="1"/>
</dbReference>
<dbReference type="SUPFAM" id="SSF52540">
    <property type="entry name" value="P-loop containing nucleoside triphosphate hydrolases"/>
    <property type="match status" value="1"/>
</dbReference>
<evidence type="ECO:0000269" key="1">
    <source>
    </source>
</evidence>
<evidence type="ECO:0000269" key="2">
    <source>
    </source>
</evidence>
<evidence type="ECO:0000305" key="3"/>
<feature type="chain" id="PRO_0000217242" description="Tyrosine-protein kinase YwqD">
    <location>
        <begin position="1"/>
        <end position="237"/>
    </location>
</feature>
<feature type="site" description="Required for activity">
    <location>
        <position position="81"/>
    </location>
</feature>
<feature type="site" description="Required for activity">
    <location>
        <position position="83"/>
    </location>
</feature>
<feature type="modified residue" description="Phosphotyrosine; by autocatalysis" evidence="1">
    <location>
        <position position="228"/>
    </location>
</feature>
<feature type="mutagenesis site" description="Abolishes ATPase activity." evidence="1">
    <original>D</original>
    <variation>A</variation>
    <location>
        <position position="81"/>
    </location>
</feature>
<feature type="mutagenesis site" description="Abolishes ATPase activity." evidence="1">
    <original>D</original>
    <variation>A</variation>
    <location>
        <position position="83"/>
    </location>
</feature>
<feature type="mutagenesis site" description="Prevents phosphorylation and increases ATPase activity; when associated with F-227 and F-228." evidence="1">
    <original>Y</original>
    <variation>F</variation>
    <location>
        <position position="225"/>
    </location>
</feature>
<feature type="mutagenesis site" description="Prevents phosphorylation and increases ATPase activity; when associated with F-225 and F-228." evidence="1">
    <original>Y</original>
    <variation>F</variation>
    <location>
        <position position="227"/>
    </location>
</feature>
<feature type="mutagenesis site" description="Prevents phosphorylation and increases ATPase activity; when associated with F-225 and F-227." evidence="1">
    <original>Y</original>
    <variation>F</variation>
    <location>
        <position position="228"/>
    </location>
</feature>
<sequence length="237" mass="25790">MALRKNRGSRMQRNVIAMTEPKSLNSEQYRTIRTNIEFASVDRQMKSVMITSACPGEGKSTTAANLAVVFAQQGKKVLLIDADLRKPTVHTAFFLENTVGLTSVLLKKSSMEQAVQASNEKHLDVLTSGPIPPNPAELLSSKWMKELAYEACAAYDMVIFDTPPILAVADAQILGNVADGSVLVISSGKTEKEQAAKAKEALATCKSKLLGAIMNGKKLSKHSEYGYYGTKDNFMQK</sequence>
<protein>
    <recommendedName>
        <fullName>Tyrosine-protein kinase YwqD</fullName>
        <ecNumber>2.7.10.2</ecNumber>
    </recommendedName>
</protein>